<feature type="chain" id="PRO_1000012304" description="Lipoyl synthase">
    <location>
        <begin position="1"/>
        <end position="321"/>
    </location>
</feature>
<feature type="domain" description="Radical SAM core" evidence="2">
    <location>
        <begin position="80"/>
        <end position="297"/>
    </location>
</feature>
<feature type="binding site" evidence="1">
    <location>
        <position position="68"/>
    </location>
    <ligand>
        <name>[4Fe-4S] cluster</name>
        <dbReference type="ChEBI" id="CHEBI:49883"/>
        <label>1</label>
    </ligand>
</feature>
<feature type="binding site" evidence="1">
    <location>
        <position position="73"/>
    </location>
    <ligand>
        <name>[4Fe-4S] cluster</name>
        <dbReference type="ChEBI" id="CHEBI:49883"/>
        <label>1</label>
    </ligand>
</feature>
<feature type="binding site" evidence="1">
    <location>
        <position position="79"/>
    </location>
    <ligand>
        <name>[4Fe-4S] cluster</name>
        <dbReference type="ChEBI" id="CHEBI:49883"/>
        <label>1</label>
    </ligand>
</feature>
<feature type="binding site" evidence="1">
    <location>
        <position position="94"/>
    </location>
    <ligand>
        <name>[4Fe-4S] cluster</name>
        <dbReference type="ChEBI" id="CHEBI:49883"/>
        <label>2</label>
        <note>4Fe-4S-S-AdoMet</note>
    </ligand>
</feature>
<feature type="binding site" evidence="1">
    <location>
        <position position="98"/>
    </location>
    <ligand>
        <name>[4Fe-4S] cluster</name>
        <dbReference type="ChEBI" id="CHEBI:49883"/>
        <label>2</label>
        <note>4Fe-4S-S-AdoMet</note>
    </ligand>
</feature>
<feature type="binding site" evidence="1">
    <location>
        <position position="101"/>
    </location>
    <ligand>
        <name>[4Fe-4S] cluster</name>
        <dbReference type="ChEBI" id="CHEBI:49883"/>
        <label>2</label>
        <note>4Fe-4S-S-AdoMet</note>
    </ligand>
</feature>
<feature type="binding site" evidence="1">
    <location>
        <position position="308"/>
    </location>
    <ligand>
        <name>[4Fe-4S] cluster</name>
        <dbReference type="ChEBI" id="CHEBI:49883"/>
        <label>1</label>
    </ligand>
</feature>
<dbReference type="EC" id="2.8.1.8" evidence="1"/>
<dbReference type="EMBL" id="CP000668">
    <property type="protein sequence ID" value="ABP41021.1"/>
    <property type="molecule type" value="Genomic_DNA"/>
</dbReference>
<dbReference type="RefSeq" id="WP_002210320.1">
    <property type="nucleotide sequence ID" value="NZ_CP009715.1"/>
</dbReference>
<dbReference type="SMR" id="A4TP09"/>
<dbReference type="GeneID" id="96664611"/>
<dbReference type="KEGG" id="ypp:YPDSF_2655"/>
<dbReference type="PATRIC" id="fig|386656.14.peg.4182"/>
<dbReference type="UniPathway" id="UPA00538">
    <property type="reaction ID" value="UER00593"/>
</dbReference>
<dbReference type="GO" id="GO:0005737">
    <property type="term" value="C:cytoplasm"/>
    <property type="evidence" value="ECO:0007669"/>
    <property type="project" value="UniProtKB-SubCell"/>
</dbReference>
<dbReference type="GO" id="GO:0051539">
    <property type="term" value="F:4 iron, 4 sulfur cluster binding"/>
    <property type="evidence" value="ECO:0007669"/>
    <property type="project" value="UniProtKB-UniRule"/>
</dbReference>
<dbReference type="GO" id="GO:0016992">
    <property type="term" value="F:lipoate synthase activity"/>
    <property type="evidence" value="ECO:0007669"/>
    <property type="project" value="UniProtKB-UniRule"/>
</dbReference>
<dbReference type="GO" id="GO:0046872">
    <property type="term" value="F:metal ion binding"/>
    <property type="evidence" value="ECO:0007669"/>
    <property type="project" value="UniProtKB-KW"/>
</dbReference>
<dbReference type="CDD" id="cd01335">
    <property type="entry name" value="Radical_SAM"/>
    <property type="match status" value="1"/>
</dbReference>
<dbReference type="FunFam" id="3.20.20.70:FF:000023">
    <property type="entry name" value="Lipoyl synthase"/>
    <property type="match status" value="1"/>
</dbReference>
<dbReference type="Gene3D" id="3.20.20.70">
    <property type="entry name" value="Aldolase class I"/>
    <property type="match status" value="1"/>
</dbReference>
<dbReference type="HAMAP" id="MF_00206">
    <property type="entry name" value="Lipoyl_synth"/>
    <property type="match status" value="1"/>
</dbReference>
<dbReference type="InterPro" id="IPR013785">
    <property type="entry name" value="Aldolase_TIM"/>
</dbReference>
<dbReference type="InterPro" id="IPR006638">
    <property type="entry name" value="Elp3/MiaA/NifB-like_rSAM"/>
</dbReference>
<dbReference type="InterPro" id="IPR031691">
    <property type="entry name" value="LIAS_N"/>
</dbReference>
<dbReference type="InterPro" id="IPR003698">
    <property type="entry name" value="Lipoyl_synth"/>
</dbReference>
<dbReference type="InterPro" id="IPR007197">
    <property type="entry name" value="rSAM"/>
</dbReference>
<dbReference type="NCBIfam" id="TIGR00510">
    <property type="entry name" value="lipA"/>
    <property type="match status" value="1"/>
</dbReference>
<dbReference type="NCBIfam" id="NF004019">
    <property type="entry name" value="PRK05481.1"/>
    <property type="match status" value="1"/>
</dbReference>
<dbReference type="NCBIfam" id="NF009544">
    <property type="entry name" value="PRK12928.1"/>
    <property type="match status" value="1"/>
</dbReference>
<dbReference type="PANTHER" id="PTHR10949">
    <property type="entry name" value="LIPOYL SYNTHASE"/>
    <property type="match status" value="1"/>
</dbReference>
<dbReference type="PANTHER" id="PTHR10949:SF0">
    <property type="entry name" value="LIPOYL SYNTHASE, MITOCHONDRIAL"/>
    <property type="match status" value="1"/>
</dbReference>
<dbReference type="Pfam" id="PF16881">
    <property type="entry name" value="LIAS_N"/>
    <property type="match status" value="1"/>
</dbReference>
<dbReference type="Pfam" id="PF04055">
    <property type="entry name" value="Radical_SAM"/>
    <property type="match status" value="1"/>
</dbReference>
<dbReference type="PIRSF" id="PIRSF005963">
    <property type="entry name" value="Lipoyl_synth"/>
    <property type="match status" value="1"/>
</dbReference>
<dbReference type="SFLD" id="SFLDF00271">
    <property type="entry name" value="lipoyl_synthase"/>
    <property type="match status" value="1"/>
</dbReference>
<dbReference type="SFLD" id="SFLDG01058">
    <property type="entry name" value="lipoyl_synthase_like"/>
    <property type="match status" value="1"/>
</dbReference>
<dbReference type="SMART" id="SM00729">
    <property type="entry name" value="Elp3"/>
    <property type="match status" value="1"/>
</dbReference>
<dbReference type="SUPFAM" id="SSF102114">
    <property type="entry name" value="Radical SAM enzymes"/>
    <property type="match status" value="1"/>
</dbReference>
<dbReference type="PROSITE" id="PS51918">
    <property type="entry name" value="RADICAL_SAM"/>
    <property type="match status" value="1"/>
</dbReference>
<keyword id="KW-0004">4Fe-4S</keyword>
<keyword id="KW-0963">Cytoplasm</keyword>
<keyword id="KW-0408">Iron</keyword>
<keyword id="KW-0411">Iron-sulfur</keyword>
<keyword id="KW-0479">Metal-binding</keyword>
<keyword id="KW-0949">S-adenosyl-L-methionine</keyword>
<keyword id="KW-0808">Transferase</keyword>
<organism>
    <name type="scientific">Yersinia pestis (strain Pestoides F)</name>
    <dbReference type="NCBI Taxonomy" id="386656"/>
    <lineage>
        <taxon>Bacteria</taxon>
        <taxon>Pseudomonadati</taxon>
        <taxon>Pseudomonadota</taxon>
        <taxon>Gammaproteobacteria</taxon>
        <taxon>Enterobacterales</taxon>
        <taxon>Yersiniaceae</taxon>
        <taxon>Yersinia</taxon>
    </lineage>
</organism>
<gene>
    <name evidence="1" type="primary">lipA</name>
    <name type="ordered locus">YPDSF_2655</name>
</gene>
<protein>
    <recommendedName>
        <fullName evidence="1">Lipoyl synthase</fullName>
        <ecNumber evidence="1">2.8.1.8</ecNumber>
    </recommendedName>
    <alternativeName>
        <fullName evidence="1">Lip-syn</fullName>
        <shortName evidence="1">LS</shortName>
    </alternativeName>
    <alternativeName>
        <fullName evidence="1">Lipoate synthase</fullName>
    </alternativeName>
    <alternativeName>
        <fullName evidence="1">Lipoic acid synthase</fullName>
    </alternativeName>
    <alternativeName>
        <fullName evidence="1">Sulfur insertion protein LipA</fullName>
    </alternativeName>
</protein>
<name>LIPA_YERPP</name>
<comment type="function">
    <text evidence="1">Catalyzes the radical-mediated insertion of two sulfur atoms into the C-6 and C-8 positions of the octanoyl moiety bound to the lipoyl domains of lipoate-dependent enzymes, thereby converting the octanoylated domains into lipoylated derivatives.</text>
</comment>
<comment type="catalytic activity">
    <reaction evidence="1">
        <text>[[Fe-S] cluster scaffold protein carrying a second [4Fe-4S](2+) cluster] + N(6)-octanoyl-L-lysyl-[protein] + 2 oxidized [2Fe-2S]-[ferredoxin] + 2 S-adenosyl-L-methionine + 4 H(+) = [[Fe-S] cluster scaffold protein] + N(6)-[(R)-dihydrolipoyl]-L-lysyl-[protein] + 4 Fe(3+) + 2 hydrogen sulfide + 2 5'-deoxyadenosine + 2 L-methionine + 2 reduced [2Fe-2S]-[ferredoxin]</text>
        <dbReference type="Rhea" id="RHEA:16585"/>
        <dbReference type="Rhea" id="RHEA-COMP:9928"/>
        <dbReference type="Rhea" id="RHEA-COMP:10000"/>
        <dbReference type="Rhea" id="RHEA-COMP:10001"/>
        <dbReference type="Rhea" id="RHEA-COMP:10475"/>
        <dbReference type="Rhea" id="RHEA-COMP:14568"/>
        <dbReference type="Rhea" id="RHEA-COMP:14569"/>
        <dbReference type="ChEBI" id="CHEBI:15378"/>
        <dbReference type="ChEBI" id="CHEBI:17319"/>
        <dbReference type="ChEBI" id="CHEBI:29034"/>
        <dbReference type="ChEBI" id="CHEBI:29919"/>
        <dbReference type="ChEBI" id="CHEBI:33722"/>
        <dbReference type="ChEBI" id="CHEBI:33737"/>
        <dbReference type="ChEBI" id="CHEBI:33738"/>
        <dbReference type="ChEBI" id="CHEBI:57844"/>
        <dbReference type="ChEBI" id="CHEBI:59789"/>
        <dbReference type="ChEBI" id="CHEBI:78809"/>
        <dbReference type="ChEBI" id="CHEBI:83100"/>
        <dbReference type="EC" id="2.8.1.8"/>
    </reaction>
</comment>
<comment type="cofactor">
    <cofactor evidence="1">
        <name>[4Fe-4S] cluster</name>
        <dbReference type="ChEBI" id="CHEBI:49883"/>
    </cofactor>
    <text evidence="1">Binds 2 [4Fe-4S] clusters per subunit. One cluster is coordinated with 3 cysteines and an exchangeable S-adenosyl-L-methionine.</text>
</comment>
<comment type="pathway">
    <text evidence="1">Protein modification; protein lipoylation via endogenous pathway; protein N(6)-(lipoyl)lysine from octanoyl-[acyl-carrier-protein]: step 2/2.</text>
</comment>
<comment type="subcellular location">
    <subcellularLocation>
        <location evidence="1">Cytoplasm</location>
    </subcellularLocation>
</comment>
<comment type="similarity">
    <text evidence="1">Belongs to the radical SAM superfamily. Lipoyl synthase family.</text>
</comment>
<proteinExistence type="inferred from homology"/>
<evidence type="ECO:0000255" key="1">
    <source>
        <dbReference type="HAMAP-Rule" id="MF_00206"/>
    </source>
</evidence>
<evidence type="ECO:0000255" key="2">
    <source>
        <dbReference type="PROSITE-ProRule" id="PRU01266"/>
    </source>
</evidence>
<accession>A4TP09</accession>
<sequence length="321" mass="36086">MSKPIQMERGVKYRDADKMALIPVKNVVTERQELLRKPEWLKIKLPTDSSRIQGIKAAMRKNGLHSVCEEASCPNLSECFNHGTATFMILGAICTRRCPFCDVAHGRPVTPDANEPEKLAQTIQDMGLRYVVITSVDRDDLRDGGAQHFADCISAIRAKNPTIKIETLVPDFRGRMDRALDILTATPPDVFNHNLENVPRVYRQVRPGANYDWSLKLLERFKEAHPDIPTKSGLMVGLGETNAEIVEVMHDLRRHGVTMLTLGQYLQPSRHHLPVQRYVSPAEFDEMKAEAMAMGFTHAACGPFVRSSYHADLQAKGMEVK</sequence>
<reference key="1">
    <citation type="submission" date="2007-02" db="EMBL/GenBank/DDBJ databases">
        <title>Complete sequence of chromosome of Yersinia pestis Pestoides F.</title>
        <authorList>
            <consortium name="US DOE Joint Genome Institute"/>
            <person name="Copeland A."/>
            <person name="Lucas S."/>
            <person name="Lapidus A."/>
            <person name="Barry K."/>
            <person name="Detter J.C."/>
            <person name="Glavina del Rio T."/>
            <person name="Hammon N."/>
            <person name="Israni S."/>
            <person name="Dalin E."/>
            <person name="Tice H."/>
            <person name="Pitluck S."/>
            <person name="Di Bartolo G."/>
            <person name="Chain P."/>
            <person name="Malfatti S."/>
            <person name="Shin M."/>
            <person name="Vergez L."/>
            <person name="Schmutz J."/>
            <person name="Larimer F."/>
            <person name="Land M."/>
            <person name="Hauser L."/>
            <person name="Worsham P."/>
            <person name="Chu M."/>
            <person name="Bearden S."/>
            <person name="Garcia E."/>
            <person name="Richardson P."/>
        </authorList>
    </citation>
    <scope>NUCLEOTIDE SEQUENCE [LARGE SCALE GENOMIC DNA]</scope>
    <source>
        <strain>Pestoides F</strain>
    </source>
</reference>